<proteinExistence type="inferred from homology"/>
<protein>
    <recommendedName>
        <fullName evidence="1">UDP-N-acetylmuramate--L-alanine ligase</fullName>
        <ecNumber evidence="1">6.3.2.8</ecNumber>
    </recommendedName>
    <alternativeName>
        <fullName evidence="1">UDP-N-acetylmuramoyl-L-alanine synthetase</fullName>
    </alternativeName>
</protein>
<sequence>MNIKDIKKINFFISEKKNKNIHLIGIGGAGMMGIALILLKLGYKVSGSDLLESLMIKKLINLGATIYLQHSEKNIKNVDFIIKSSAISSNNKEILAAKKRNIPILLRAEMIEILMSFKKGIAVSGTHGKTTTTSMIADIFIDSGLDPTVINGGLIKSINSYAKLGSSSYFITEADESDASFLYLNPNIIIVTNIESDHIDHYDNSFKKLKQTFLTFLKKITLYGTAIVCIDNNAICDILTNLKCKIITYGFNKNADVRIFLYKQNNFIGHFYIILKNNKKLNIILNIPGKHNALNAAAAIALAIHEGINNDLMITSLKNFQGTCRRFEFLGFLSIDQGFDKRANCMLIDDYGHHPTELSETIKTIRISWPNKNLIMIFQPHRYTRTYNLYHDFVQTLSQVDVLLILHVYSANEKFIVGADSLSLFNDIKKLGKNYVTLISNHNMILDTLIQTLQGNDIILIQGAGNIDTIAHKILIKKTKKVIK</sequence>
<evidence type="ECO:0000255" key="1">
    <source>
        <dbReference type="HAMAP-Rule" id="MF_00046"/>
    </source>
</evidence>
<organism>
    <name type="scientific">Buchnera aphidicola subsp. Acyrthosiphon pisum (strain Tuc7)</name>
    <dbReference type="NCBI Taxonomy" id="561501"/>
    <lineage>
        <taxon>Bacteria</taxon>
        <taxon>Pseudomonadati</taxon>
        <taxon>Pseudomonadota</taxon>
        <taxon>Gammaproteobacteria</taxon>
        <taxon>Enterobacterales</taxon>
        <taxon>Erwiniaceae</taxon>
        <taxon>Buchnera</taxon>
    </lineage>
</organism>
<name>MURC_BUCAT</name>
<feature type="chain" id="PRO_1000117398" description="UDP-N-acetylmuramate--L-alanine ligase">
    <location>
        <begin position="1"/>
        <end position="484"/>
    </location>
</feature>
<feature type="binding site" evidence="1">
    <location>
        <begin position="125"/>
        <end position="131"/>
    </location>
    <ligand>
        <name>ATP</name>
        <dbReference type="ChEBI" id="CHEBI:30616"/>
    </ligand>
</feature>
<comment type="function">
    <text evidence="1">Cell wall formation.</text>
</comment>
<comment type="catalytic activity">
    <reaction evidence="1">
        <text>UDP-N-acetyl-alpha-D-muramate + L-alanine + ATP = UDP-N-acetyl-alpha-D-muramoyl-L-alanine + ADP + phosphate + H(+)</text>
        <dbReference type="Rhea" id="RHEA:23372"/>
        <dbReference type="ChEBI" id="CHEBI:15378"/>
        <dbReference type="ChEBI" id="CHEBI:30616"/>
        <dbReference type="ChEBI" id="CHEBI:43474"/>
        <dbReference type="ChEBI" id="CHEBI:57972"/>
        <dbReference type="ChEBI" id="CHEBI:70757"/>
        <dbReference type="ChEBI" id="CHEBI:83898"/>
        <dbReference type="ChEBI" id="CHEBI:456216"/>
        <dbReference type="EC" id="6.3.2.8"/>
    </reaction>
</comment>
<comment type="pathway">
    <text evidence="1">Cell wall biogenesis; peptidoglycan biosynthesis.</text>
</comment>
<comment type="subcellular location">
    <subcellularLocation>
        <location evidence="1">Cytoplasm</location>
    </subcellularLocation>
</comment>
<comment type="similarity">
    <text evidence="1">Belongs to the MurCDEF family.</text>
</comment>
<gene>
    <name evidence="1" type="primary">murC</name>
    <name type="ordered locus">BUAPTUC7_213</name>
</gene>
<reference key="1">
    <citation type="journal article" date="2009" name="Science">
        <title>The dynamics and time scale of ongoing genomic erosion in symbiotic bacteria.</title>
        <authorList>
            <person name="Moran N.A."/>
            <person name="McLaughlin H.J."/>
            <person name="Sorek R."/>
        </authorList>
    </citation>
    <scope>NUCLEOTIDE SEQUENCE [LARGE SCALE GENOMIC DNA]</scope>
    <source>
        <strain>Tuc7</strain>
    </source>
</reference>
<dbReference type="EC" id="6.3.2.8" evidence="1"/>
<dbReference type="EMBL" id="CP001158">
    <property type="protein sequence ID" value="ACL30033.1"/>
    <property type="molecule type" value="Genomic_DNA"/>
</dbReference>
<dbReference type="RefSeq" id="WP_012619471.1">
    <property type="nucleotide sequence ID" value="NC_011834.1"/>
</dbReference>
<dbReference type="SMR" id="B8D7B8"/>
<dbReference type="KEGG" id="bau:BUAPTUC7_213"/>
<dbReference type="HOGENOM" id="CLU_028104_2_2_6"/>
<dbReference type="UniPathway" id="UPA00219"/>
<dbReference type="GO" id="GO:0005737">
    <property type="term" value="C:cytoplasm"/>
    <property type="evidence" value="ECO:0007669"/>
    <property type="project" value="UniProtKB-SubCell"/>
</dbReference>
<dbReference type="GO" id="GO:0005524">
    <property type="term" value="F:ATP binding"/>
    <property type="evidence" value="ECO:0007669"/>
    <property type="project" value="UniProtKB-UniRule"/>
</dbReference>
<dbReference type="GO" id="GO:0008763">
    <property type="term" value="F:UDP-N-acetylmuramate-L-alanine ligase activity"/>
    <property type="evidence" value="ECO:0007669"/>
    <property type="project" value="UniProtKB-UniRule"/>
</dbReference>
<dbReference type="GO" id="GO:0051301">
    <property type="term" value="P:cell division"/>
    <property type="evidence" value="ECO:0007669"/>
    <property type="project" value="UniProtKB-KW"/>
</dbReference>
<dbReference type="GO" id="GO:0071555">
    <property type="term" value="P:cell wall organization"/>
    <property type="evidence" value="ECO:0007669"/>
    <property type="project" value="UniProtKB-KW"/>
</dbReference>
<dbReference type="GO" id="GO:0009252">
    <property type="term" value="P:peptidoglycan biosynthetic process"/>
    <property type="evidence" value="ECO:0007669"/>
    <property type="project" value="UniProtKB-UniRule"/>
</dbReference>
<dbReference type="GO" id="GO:0008360">
    <property type="term" value="P:regulation of cell shape"/>
    <property type="evidence" value="ECO:0007669"/>
    <property type="project" value="UniProtKB-KW"/>
</dbReference>
<dbReference type="Gene3D" id="3.90.190.20">
    <property type="entry name" value="Mur ligase, C-terminal domain"/>
    <property type="match status" value="1"/>
</dbReference>
<dbReference type="Gene3D" id="3.40.1190.10">
    <property type="entry name" value="Mur-like, catalytic domain"/>
    <property type="match status" value="1"/>
</dbReference>
<dbReference type="Gene3D" id="3.40.50.720">
    <property type="entry name" value="NAD(P)-binding Rossmann-like Domain"/>
    <property type="match status" value="1"/>
</dbReference>
<dbReference type="HAMAP" id="MF_00046">
    <property type="entry name" value="MurC"/>
    <property type="match status" value="1"/>
</dbReference>
<dbReference type="InterPro" id="IPR036565">
    <property type="entry name" value="Mur-like_cat_sf"/>
</dbReference>
<dbReference type="InterPro" id="IPR004101">
    <property type="entry name" value="Mur_ligase_C"/>
</dbReference>
<dbReference type="InterPro" id="IPR036615">
    <property type="entry name" value="Mur_ligase_C_dom_sf"/>
</dbReference>
<dbReference type="InterPro" id="IPR013221">
    <property type="entry name" value="Mur_ligase_cen"/>
</dbReference>
<dbReference type="InterPro" id="IPR000713">
    <property type="entry name" value="Mur_ligase_N"/>
</dbReference>
<dbReference type="InterPro" id="IPR050061">
    <property type="entry name" value="MurCDEF_pg_biosynth"/>
</dbReference>
<dbReference type="InterPro" id="IPR005758">
    <property type="entry name" value="UDP-N-AcMur_Ala_ligase_MurC"/>
</dbReference>
<dbReference type="NCBIfam" id="TIGR01082">
    <property type="entry name" value="murC"/>
    <property type="match status" value="1"/>
</dbReference>
<dbReference type="PANTHER" id="PTHR43445:SF3">
    <property type="entry name" value="UDP-N-ACETYLMURAMATE--L-ALANINE LIGASE"/>
    <property type="match status" value="1"/>
</dbReference>
<dbReference type="PANTHER" id="PTHR43445">
    <property type="entry name" value="UDP-N-ACETYLMURAMATE--L-ALANINE LIGASE-RELATED"/>
    <property type="match status" value="1"/>
</dbReference>
<dbReference type="Pfam" id="PF01225">
    <property type="entry name" value="Mur_ligase"/>
    <property type="match status" value="1"/>
</dbReference>
<dbReference type="Pfam" id="PF02875">
    <property type="entry name" value="Mur_ligase_C"/>
    <property type="match status" value="1"/>
</dbReference>
<dbReference type="Pfam" id="PF08245">
    <property type="entry name" value="Mur_ligase_M"/>
    <property type="match status" value="1"/>
</dbReference>
<dbReference type="SUPFAM" id="SSF51984">
    <property type="entry name" value="MurCD N-terminal domain"/>
    <property type="match status" value="1"/>
</dbReference>
<dbReference type="SUPFAM" id="SSF53623">
    <property type="entry name" value="MurD-like peptide ligases, catalytic domain"/>
    <property type="match status" value="1"/>
</dbReference>
<dbReference type="SUPFAM" id="SSF53244">
    <property type="entry name" value="MurD-like peptide ligases, peptide-binding domain"/>
    <property type="match status" value="1"/>
</dbReference>
<keyword id="KW-0067">ATP-binding</keyword>
<keyword id="KW-0131">Cell cycle</keyword>
<keyword id="KW-0132">Cell division</keyword>
<keyword id="KW-0133">Cell shape</keyword>
<keyword id="KW-0961">Cell wall biogenesis/degradation</keyword>
<keyword id="KW-0963">Cytoplasm</keyword>
<keyword id="KW-0436">Ligase</keyword>
<keyword id="KW-0547">Nucleotide-binding</keyword>
<keyword id="KW-0573">Peptidoglycan synthesis</keyword>
<accession>B8D7B8</accession>